<gene>
    <name evidence="1" type="primary">rpmI</name>
    <name type="ordered locus">Teth39_0768</name>
</gene>
<keyword id="KW-1185">Reference proteome</keyword>
<keyword id="KW-0687">Ribonucleoprotein</keyword>
<keyword id="KW-0689">Ribosomal protein</keyword>
<sequence>MPKMKTHRGAAKRFKVLKSGKVKRSRAYKSHLLTHKNAKRKRRLRKATYLVGADAKNIKRLLPYS</sequence>
<proteinExistence type="inferred from homology"/>
<organism>
    <name type="scientific">Thermoanaerobacter pseudethanolicus (strain ATCC 33223 / 39E)</name>
    <name type="common">Clostridium thermohydrosulfuricum</name>
    <dbReference type="NCBI Taxonomy" id="340099"/>
    <lineage>
        <taxon>Bacteria</taxon>
        <taxon>Bacillati</taxon>
        <taxon>Bacillota</taxon>
        <taxon>Clostridia</taxon>
        <taxon>Thermoanaerobacterales</taxon>
        <taxon>Thermoanaerobacteraceae</taxon>
        <taxon>Thermoanaerobacter</taxon>
    </lineage>
</organism>
<comment type="similarity">
    <text evidence="1">Belongs to the bacterial ribosomal protein bL35 family.</text>
</comment>
<name>RL35_THEP3</name>
<evidence type="ECO:0000255" key="1">
    <source>
        <dbReference type="HAMAP-Rule" id="MF_00514"/>
    </source>
</evidence>
<evidence type="ECO:0000305" key="2"/>
<reference key="1">
    <citation type="submission" date="2008-01" db="EMBL/GenBank/DDBJ databases">
        <title>Complete sequence of Thermoanaerobacter pseudethanolicus 39E.</title>
        <authorList>
            <person name="Copeland A."/>
            <person name="Lucas S."/>
            <person name="Lapidus A."/>
            <person name="Barry K."/>
            <person name="Glavina del Rio T."/>
            <person name="Dalin E."/>
            <person name="Tice H."/>
            <person name="Pitluck S."/>
            <person name="Bruce D."/>
            <person name="Goodwin L."/>
            <person name="Saunders E."/>
            <person name="Brettin T."/>
            <person name="Detter J.C."/>
            <person name="Han C."/>
            <person name="Schmutz J."/>
            <person name="Larimer F."/>
            <person name="Land M."/>
            <person name="Hauser L."/>
            <person name="Kyrpides N."/>
            <person name="Lykidis A."/>
            <person name="Hemme C."/>
            <person name="Fields M.W."/>
            <person name="He Z."/>
            <person name="Zhou J."/>
            <person name="Richardson P."/>
        </authorList>
    </citation>
    <scope>NUCLEOTIDE SEQUENCE [LARGE SCALE GENOMIC DNA]</scope>
    <source>
        <strain>ATCC 33223 / DSM 2355 / 39E</strain>
    </source>
</reference>
<protein>
    <recommendedName>
        <fullName evidence="1">Large ribosomal subunit protein bL35</fullName>
    </recommendedName>
    <alternativeName>
        <fullName evidence="2">50S ribosomal protein L35</fullName>
    </alternativeName>
</protein>
<accession>B0K8B4</accession>
<dbReference type="EMBL" id="CP000924">
    <property type="protein sequence ID" value="ABY94427.1"/>
    <property type="molecule type" value="Genomic_DNA"/>
</dbReference>
<dbReference type="RefSeq" id="WP_004401892.1">
    <property type="nucleotide sequence ID" value="NC_010321.1"/>
</dbReference>
<dbReference type="SMR" id="B0K8B4"/>
<dbReference type="STRING" id="340099.Teth39_0768"/>
<dbReference type="KEGG" id="tpd:Teth39_0768"/>
<dbReference type="eggNOG" id="COG0291">
    <property type="taxonomic scope" value="Bacteria"/>
</dbReference>
<dbReference type="HOGENOM" id="CLU_169643_4_3_9"/>
<dbReference type="Proteomes" id="UP000002156">
    <property type="component" value="Chromosome"/>
</dbReference>
<dbReference type="GO" id="GO:0022625">
    <property type="term" value="C:cytosolic large ribosomal subunit"/>
    <property type="evidence" value="ECO:0007669"/>
    <property type="project" value="TreeGrafter"/>
</dbReference>
<dbReference type="GO" id="GO:0003735">
    <property type="term" value="F:structural constituent of ribosome"/>
    <property type="evidence" value="ECO:0007669"/>
    <property type="project" value="InterPro"/>
</dbReference>
<dbReference type="GO" id="GO:0006412">
    <property type="term" value="P:translation"/>
    <property type="evidence" value="ECO:0007669"/>
    <property type="project" value="UniProtKB-UniRule"/>
</dbReference>
<dbReference type="FunFam" id="4.10.410.60:FF:000001">
    <property type="entry name" value="50S ribosomal protein L35"/>
    <property type="match status" value="1"/>
</dbReference>
<dbReference type="Gene3D" id="4.10.410.60">
    <property type="match status" value="1"/>
</dbReference>
<dbReference type="HAMAP" id="MF_00514">
    <property type="entry name" value="Ribosomal_bL35"/>
    <property type="match status" value="1"/>
</dbReference>
<dbReference type="InterPro" id="IPR001706">
    <property type="entry name" value="Ribosomal_bL35"/>
</dbReference>
<dbReference type="InterPro" id="IPR021137">
    <property type="entry name" value="Ribosomal_bL35-like"/>
</dbReference>
<dbReference type="InterPro" id="IPR018265">
    <property type="entry name" value="Ribosomal_bL35_CS"/>
</dbReference>
<dbReference type="InterPro" id="IPR037229">
    <property type="entry name" value="Ribosomal_bL35_sf"/>
</dbReference>
<dbReference type="NCBIfam" id="TIGR00001">
    <property type="entry name" value="rpmI_bact"/>
    <property type="match status" value="1"/>
</dbReference>
<dbReference type="PANTHER" id="PTHR33343">
    <property type="entry name" value="54S RIBOSOMAL PROTEIN BL35M"/>
    <property type="match status" value="1"/>
</dbReference>
<dbReference type="PANTHER" id="PTHR33343:SF1">
    <property type="entry name" value="LARGE RIBOSOMAL SUBUNIT PROTEIN BL35M"/>
    <property type="match status" value="1"/>
</dbReference>
<dbReference type="Pfam" id="PF01632">
    <property type="entry name" value="Ribosomal_L35p"/>
    <property type="match status" value="1"/>
</dbReference>
<dbReference type="PRINTS" id="PR00064">
    <property type="entry name" value="RIBOSOMALL35"/>
</dbReference>
<dbReference type="SUPFAM" id="SSF143034">
    <property type="entry name" value="L35p-like"/>
    <property type="match status" value="1"/>
</dbReference>
<dbReference type="PROSITE" id="PS00936">
    <property type="entry name" value="RIBOSOMAL_L35"/>
    <property type="match status" value="1"/>
</dbReference>
<feature type="chain" id="PRO_1000127419" description="Large ribosomal subunit protein bL35">
    <location>
        <begin position="1"/>
        <end position="65"/>
    </location>
</feature>